<gene>
    <name type="primary">PDF2.1</name>
    <name type="synonym">LCR70</name>
    <name type="ordered locus">At2g02120</name>
    <name type="ORF">F5O4.11</name>
</gene>
<proteinExistence type="evidence at transcript level"/>
<feature type="signal peptide" evidence="2">
    <location>
        <begin position="1"/>
        <end position="30"/>
    </location>
</feature>
<feature type="chain" id="PRO_0000007025" description="Defensin-like protein 4">
    <location>
        <begin position="31"/>
        <end position="77"/>
    </location>
</feature>
<feature type="disulfide bond" evidence="1">
    <location>
        <begin position="33"/>
        <end position="77"/>
    </location>
</feature>
<feature type="disulfide bond" evidence="1">
    <location>
        <begin position="44"/>
        <end position="64"/>
    </location>
</feature>
<feature type="disulfide bond" evidence="1">
    <location>
        <begin position="50"/>
        <end position="71"/>
    </location>
</feature>
<feature type="disulfide bond" evidence="1">
    <location>
        <begin position="54"/>
        <end position="73"/>
    </location>
</feature>
<feature type="sequence conflict" description="In Ref. 5; CAA79029." evidence="4" ref="5">
    <original>V</original>
    <variation>D</variation>
    <location>
        <position position="19"/>
    </location>
</feature>
<feature type="sequence conflict" description="In Ref. 5; CAA79029." evidence="4" ref="5">
    <original>R</original>
    <variation>G</variation>
    <location>
        <position position="69"/>
    </location>
</feature>
<sequence>MKFSMRLISAVLFLVMIFVATGMGPVTVEARTCASQSQRFKGKCVSDTNCENVCHNEGFPGGDCRGFRRRCFCTRNC</sequence>
<reference key="1">
    <citation type="journal article" date="1999" name="Nature">
        <title>Sequence and analysis of chromosome 2 of the plant Arabidopsis thaliana.</title>
        <authorList>
            <person name="Lin X."/>
            <person name="Kaul S."/>
            <person name="Rounsley S.D."/>
            <person name="Shea T.P."/>
            <person name="Benito M.-I."/>
            <person name="Town C.D."/>
            <person name="Fujii C.Y."/>
            <person name="Mason T.M."/>
            <person name="Bowman C.L."/>
            <person name="Barnstead M.E."/>
            <person name="Feldblyum T.V."/>
            <person name="Buell C.R."/>
            <person name="Ketchum K.A."/>
            <person name="Lee J.J."/>
            <person name="Ronning C.M."/>
            <person name="Koo H.L."/>
            <person name="Moffat K.S."/>
            <person name="Cronin L.A."/>
            <person name="Shen M."/>
            <person name="Pai G."/>
            <person name="Van Aken S."/>
            <person name="Umayam L."/>
            <person name="Tallon L.J."/>
            <person name="Gill J.E."/>
            <person name="Adams M.D."/>
            <person name="Carrera A.J."/>
            <person name="Creasy T.H."/>
            <person name="Goodman H.M."/>
            <person name="Somerville C.R."/>
            <person name="Copenhaver G.P."/>
            <person name="Preuss D."/>
            <person name="Nierman W.C."/>
            <person name="White O."/>
            <person name="Eisen J.A."/>
            <person name="Salzberg S.L."/>
            <person name="Fraser C.M."/>
            <person name="Venter J.C."/>
        </authorList>
    </citation>
    <scope>NUCLEOTIDE SEQUENCE [LARGE SCALE GENOMIC DNA]</scope>
    <source>
        <strain>cv. Columbia</strain>
    </source>
</reference>
<reference key="2">
    <citation type="journal article" date="2017" name="Plant J.">
        <title>Araport11: a complete reannotation of the Arabidopsis thaliana reference genome.</title>
        <authorList>
            <person name="Cheng C.Y."/>
            <person name="Krishnakumar V."/>
            <person name="Chan A.P."/>
            <person name="Thibaud-Nissen F."/>
            <person name="Schobel S."/>
            <person name="Town C.D."/>
        </authorList>
    </citation>
    <scope>GENOME REANNOTATION</scope>
    <source>
        <strain>cv. Columbia</strain>
    </source>
</reference>
<reference key="3">
    <citation type="journal article" date="2002" name="Science">
        <title>Functional annotation of a full-length Arabidopsis cDNA collection.</title>
        <authorList>
            <person name="Seki M."/>
            <person name="Narusaka M."/>
            <person name="Kamiya A."/>
            <person name="Ishida J."/>
            <person name="Satou M."/>
            <person name="Sakurai T."/>
            <person name="Nakajima M."/>
            <person name="Enju A."/>
            <person name="Akiyama K."/>
            <person name="Oono Y."/>
            <person name="Muramatsu M."/>
            <person name="Hayashizaki Y."/>
            <person name="Kawai J."/>
            <person name="Carninci P."/>
            <person name="Itoh M."/>
            <person name="Ishii Y."/>
            <person name="Arakawa T."/>
            <person name="Shibata K."/>
            <person name="Shinagawa A."/>
            <person name="Shinozaki K."/>
        </authorList>
    </citation>
    <scope>NUCLEOTIDE SEQUENCE [LARGE SCALE MRNA]</scope>
    <source>
        <strain>cv. Columbia</strain>
    </source>
</reference>
<reference key="4">
    <citation type="journal article" date="2003" name="Science">
        <title>Empirical analysis of transcriptional activity in the Arabidopsis genome.</title>
        <authorList>
            <person name="Yamada K."/>
            <person name="Lim J."/>
            <person name="Dale J.M."/>
            <person name="Chen H."/>
            <person name="Shinn P."/>
            <person name="Palm C.J."/>
            <person name="Southwick A.M."/>
            <person name="Wu H.C."/>
            <person name="Kim C.J."/>
            <person name="Nguyen M."/>
            <person name="Pham P.K."/>
            <person name="Cheuk R.F."/>
            <person name="Karlin-Newmann G."/>
            <person name="Liu S.X."/>
            <person name="Lam B."/>
            <person name="Sakano H."/>
            <person name="Wu T."/>
            <person name="Yu G."/>
            <person name="Miranda M."/>
            <person name="Quach H.L."/>
            <person name="Tripp M."/>
            <person name="Chang C.H."/>
            <person name="Lee J.M."/>
            <person name="Toriumi M.J."/>
            <person name="Chan M.M."/>
            <person name="Tang C.C."/>
            <person name="Onodera C.S."/>
            <person name="Deng J.M."/>
            <person name="Akiyama K."/>
            <person name="Ansari Y."/>
            <person name="Arakawa T."/>
            <person name="Banh J."/>
            <person name="Banno F."/>
            <person name="Bowser L."/>
            <person name="Brooks S.Y."/>
            <person name="Carninci P."/>
            <person name="Chao Q."/>
            <person name="Choy N."/>
            <person name="Enju A."/>
            <person name="Goldsmith A.D."/>
            <person name="Gurjal M."/>
            <person name="Hansen N.F."/>
            <person name="Hayashizaki Y."/>
            <person name="Johnson-Hopson C."/>
            <person name="Hsuan V.W."/>
            <person name="Iida K."/>
            <person name="Karnes M."/>
            <person name="Khan S."/>
            <person name="Koesema E."/>
            <person name="Ishida J."/>
            <person name="Jiang P.X."/>
            <person name="Jones T."/>
            <person name="Kawai J."/>
            <person name="Kamiya A."/>
            <person name="Meyers C."/>
            <person name="Nakajima M."/>
            <person name="Narusaka M."/>
            <person name="Seki M."/>
            <person name="Sakurai T."/>
            <person name="Satou M."/>
            <person name="Tamse R."/>
            <person name="Vaysberg M."/>
            <person name="Wallender E.K."/>
            <person name="Wong C."/>
            <person name="Yamamura Y."/>
            <person name="Yuan S."/>
            <person name="Shinozaki K."/>
            <person name="Davis R.W."/>
            <person name="Theologis A."/>
            <person name="Ecker J.R."/>
        </authorList>
    </citation>
    <scope>NUCLEOTIDE SEQUENCE [LARGE SCALE MRNA]</scope>
    <source>
        <strain>cv. Columbia</strain>
    </source>
</reference>
<reference key="5">
    <citation type="journal article" date="1993" name="Plant J.">
        <title>An inventory of 1152 expressed sequence tags obtained by partial sequencing of cDNAs from Arabidopsis thaliana.</title>
        <authorList>
            <person name="Hoefte H."/>
            <person name="Desprez T."/>
            <person name="Amselem J."/>
            <person name="Chiapello H."/>
            <person name="Rouze P."/>
            <person name="Caboche M."/>
            <person name="Moisan A."/>
            <person name="Jourjon M.-F."/>
            <person name="Charpenteau J.-L."/>
            <person name="Berthomieu P."/>
            <person name="Guerrier D."/>
            <person name="Giraudat J."/>
            <person name="Quigley F."/>
            <person name="Thomas F."/>
            <person name="Yu D.-Y."/>
            <person name="Mache R."/>
            <person name="Raynal M."/>
            <person name="Cooke R."/>
            <person name="Grellet F."/>
            <person name="Delseny M."/>
            <person name="Parmentier Y."/>
            <person name="de Marcillac G."/>
            <person name="Gigot C."/>
            <person name="Fleck J."/>
            <person name="Philipps G."/>
            <person name="Axelos M."/>
            <person name="Bardet C."/>
            <person name="Tremousaygue D."/>
            <person name="Lescure B."/>
        </authorList>
    </citation>
    <scope>NUCLEOTIDE SEQUENCE [LARGE SCALE MRNA]</scope>
    <source>
        <strain>cv. Columbia</strain>
        <tissue>Green siliques</tissue>
    </source>
</reference>
<reference key="6">
    <citation type="journal article" date="1998" name="Plant Physiol. Biochem.">
        <title>Tissue-specific expression of plant defensin genes PDF2.1 and PDF2.2 in Arabidopsis thaliana.</title>
        <authorList>
            <person name="Thomma B.P.H.J."/>
            <person name="Broekaert W.F."/>
        </authorList>
    </citation>
    <scope>TISSUE SPECIFICITY</scope>
</reference>
<reference key="7">
    <citation type="journal article" date="2001" name="Plant Mol. Biol.">
        <title>Two large Arabidopsis thaliana gene families are homologous to the Brassica gene superfamily that encodes pollen coat proteins and the male component of the self-incompatibility response.</title>
        <authorList>
            <person name="Vanoosthuyse V."/>
            <person name="Miege C."/>
            <person name="Dumas C."/>
            <person name="Cock J.M."/>
        </authorList>
    </citation>
    <scope>IDENTIFICATION</scope>
</reference>
<reference key="8">
    <citation type="journal article" date="2002" name="Planta">
        <title>Plant defensins.</title>
        <authorList>
            <person name="Thomma B.P.H.J."/>
            <person name="Cammue B.P."/>
            <person name="Thevissen K."/>
        </authorList>
    </citation>
    <scope>GENE FAMILY</scope>
    <scope>NOMENCLATURE</scope>
</reference>
<reference key="9">
    <citation type="journal article" date="2005" name="Plant Physiol.">
        <title>Genome organization of more than 300 defensin-like genes in Arabidopsis.</title>
        <authorList>
            <person name="Silverstein K.A.T."/>
            <person name="Graham M.A."/>
            <person name="Paape T.D."/>
            <person name="VandenBosch K.A."/>
        </authorList>
    </citation>
    <scope>GENE FAMILY</scope>
</reference>
<comment type="function">
    <text>Confers broad-spectrum resistance to pathogens.</text>
</comment>
<comment type="subcellular location">
    <subcellularLocation>
        <location evidence="1">Secreted</location>
    </subcellularLocation>
</comment>
<comment type="tissue specificity">
    <text evidence="3">Expressed in roots, siliques and seeds.</text>
</comment>
<comment type="similarity">
    <text evidence="4">Belongs to the DEFL family.</text>
</comment>
<dbReference type="EMBL" id="AC005936">
    <property type="protein sequence ID" value="AAC97222.1"/>
    <property type="molecule type" value="Genomic_DNA"/>
</dbReference>
<dbReference type="EMBL" id="CP002685">
    <property type="protein sequence ID" value="AEC05548.1"/>
    <property type="molecule type" value="Genomic_DNA"/>
</dbReference>
<dbReference type="EMBL" id="AK117966">
    <property type="protein sequence ID" value="BAC42603.1"/>
    <property type="molecule type" value="mRNA"/>
</dbReference>
<dbReference type="EMBL" id="BT004647">
    <property type="protein sequence ID" value="AAO42893.1"/>
    <property type="molecule type" value="mRNA"/>
</dbReference>
<dbReference type="EMBL" id="Z17665">
    <property type="protein sequence ID" value="CAA79029.1"/>
    <property type="molecule type" value="mRNA"/>
</dbReference>
<dbReference type="PIR" id="B84433">
    <property type="entry name" value="B84433"/>
</dbReference>
<dbReference type="RefSeq" id="NP_178320.1">
    <property type="nucleotide sequence ID" value="NM_126272.4"/>
</dbReference>
<dbReference type="SMR" id="Q41914"/>
<dbReference type="FunCoup" id="Q41914">
    <property type="interactions" value="18"/>
</dbReference>
<dbReference type="STRING" id="3702.Q41914"/>
<dbReference type="PaxDb" id="3702-AT2G02120.1"/>
<dbReference type="ProteomicsDB" id="224065"/>
<dbReference type="EnsemblPlants" id="AT2G02120.1">
    <property type="protein sequence ID" value="AT2G02120.1"/>
    <property type="gene ID" value="AT2G02120"/>
</dbReference>
<dbReference type="GeneID" id="814743"/>
<dbReference type="Gramene" id="AT2G02120.1">
    <property type="protein sequence ID" value="AT2G02120.1"/>
    <property type="gene ID" value="AT2G02120"/>
</dbReference>
<dbReference type="KEGG" id="ath:AT2G02120"/>
<dbReference type="Araport" id="AT2G02120"/>
<dbReference type="TAIR" id="AT2G02120">
    <property type="gene designation" value="PDF2.1"/>
</dbReference>
<dbReference type="eggNOG" id="ENOG502S7HM">
    <property type="taxonomic scope" value="Eukaryota"/>
</dbReference>
<dbReference type="HOGENOM" id="CLU_161668_1_2_1"/>
<dbReference type="InParanoid" id="Q41914"/>
<dbReference type="OMA" id="NANCKAI"/>
<dbReference type="OrthoDB" id="683455at2759"/>
<dbReference type="PhylomeDB" id="Q41914"/>
<dbReference type="PRO" id="PR:Q41914"/>
<dbReference type="Proteomes" id="UP000006548">
    <property type="component" value="Chromosome 2"/>
</dbReference>
<dbReference type="ExpressionAtlas" id="Q41914">
    <property type="expression patterns" value="baseline and differential"/>
</dbReference>
<dbReference type="GO" id="GO:0005576">
    <property type="term" value="C:extracellular region"/>
    <property type="evidence" value="ECO:0007669"/>
    <property type="project" value="UniProtKB-SubCell"/>
</dbReference>
<dbReference type="GO" id="GO:0006952">
    <property type="term" value="P:defense response"/>
    <property type="evidence" value="ECO:0000250"/>
    <property type="project" value="TAIR"/>
</dbReference>
<dbReference type="GO" id="GO:0050832">
    <property type="term" value="P:defense response to fungus"/>
    <property type="evidence" value="ECO:0007669"/>
    <property type="project" value="UniProtKB-KW"/>
</dbReference>
<dbReference type="GO" id="GO:0031640">
    <property type="term" value="P:killing of cells of another organism"/>
    <property type="evidence" value="ECO:0007669"/>
    <property type="project" value="UniProtKB-KW"/>
</dbReference>
<dbReference type="CDD" id="cd00107">
    <property type="entry name" value="Knot1"/>
    <property type="match status" value="1"/>
</dbReference>
<dbReference type="FunFam" id="3.30.30.10:FF:000004">
    <property type="entry name" value="Defensin-like protein CAL1"/>
    <property type="match status" value="1"/>
</dbReference>
<dbReference type="Gene3D" id="3.30.30.10">
    <property type="entry name" value="Knottin, scorpion toxin-like"/>
    <property type="match status" value="1"/>
</dbReference>
<dbReference type="InterPro" id="IPR008176">
    <property type="entry name" value="Defensin_plant"/>
</dbReference>
<dbReference type="InterPro" id="IPR003614">
    <property type="entry name" value="Scorpion_toxin-like"/>
</dbReference>
<dbReference type="InterPro" id="IPR036574">
    <property type="entry name" value="Scorpion_toxin-like_sf"/>
</dbReference>
<dbReference type="PANTHER" id="PTHR33147">
    <property type="entry name" value="DEFENSIN-LIKE PROTEIN 1"/>
    <property type="match status" value="1"/>
</dbReference>
<dbReference type="PANTHER" id="PTHR33147:SF129">
    <property type="entry name" value="DEFENSIN-LIKE PROTEIN 2-RELATED"/>
    <property type="match status" value="1"/>
</dbReference>
<dbReference type="Pfam" id="PF00304">
    <property type="entry name" value="Gamma-thionin"/>
    <property type="match status" value="1"/>
</dbReference>
<dbReference type="PRINTS" id="PR00288">
    <property type="entry name" value="PUROTHIONIN"/>
</dbReference>
<dbReference type="SMART" id="SM00505">
    <property type="entry name" value="Knot1"/>
    <property type="match status" value="1"/>
</dbReference>
<dbReference type="SUPFAM" id="SSF57095">
    <property type="entry name" value="Scorpion toxin-like"/>
    <property type="match status" value="1"/>
</dbReference>
<dbReference type="PROSITE" id="PS00940">
    <property type="entry name" value="GAMMA_THIONIN"/>
    <property type="match status" value="1"/>
</dbReference>
<accession>Q41914</accession>
<accession>Q541X5</accession>
<accession>Q9ZUL6</accession>
<evidence type="ECO:0000250" key="1"/>
<evidence type="ECO:0000255" key="2"/>
<evidence type="ECO:0000269" key="3">
    <source ref="6"/>
</evidence>
<evidence type="ECO:0000305" key="4"/>
<protein>
    <recommendedName>
        <fullName>Defensin-like protein 4</fullName>
    </recommendedName>
    <alternativeName>
        <fullName>Low-molecular-weight cysteine-rich protein 70</fullName>
        <shortName>Protein LCR70</shortName>
    </alternativeName>
    <alternativeName>
        <fullName>Plant defensin 2.1</fullName>
    </alternativeName>
</protein>
<organism>
    <name type="scientific">Arabidopsis thaliana</name>
    <name type="common">Mouse-ear cress</name>
    <dbReference type="NCBI Taxonomy" id="3702"/>
    <lineage>
        <taxon>Eukaryota</taxon>
        <taxon>Viridiplantae</taxon>
        <taxon>Streptophyta</taxon>
        <taxon>Embryophyta</taxon>
        <taxon>Tracheophyta</taxon>
        <taxon>Spermatophyta</taxon>
        <taxon>Magnoliopsida</taxon>
        <taxon>eudicotyledons</taxon>
        <taxon>Gunneridae</taxon>
        <taxon>Pentapetalae</taxon>
        <taxon>rosids</taxon>
        <taxon>malvids</taxon>
        <taxon>Brassicales</taxon>
        <taxon>Brassicaceae</taxon>
        <taxon>Camelineae</taxon>
        <taxon>Arabidopsis</taxon>
    </lineage>
</organism>
<keyword id="KW-0929">Antimicrobial</keyword>
<keyword id="KW-1015">Disulfide bond</keyword>
<keyword id="KW-0295">Fungicide</keyword>
<keyword id="KW-0611">Plant defense</keyword>
<keyword id="KW-1185">Reference proteome</keyword>
<keyword id="KW-0964">Secreted</keyword>
<keyword id="KW-0732">Signal</keyword>
<name>DEF04_ARATH</name>